<name>KAX3C_ANDAM</name>
<comment type="function">
    <text evidence="2">Potent inhibitor of voltage-dependent potassium channels, with a preference for Kv1.3/KCNA3 versus Kv1.2/KCNA2.</text>
</comment>
<comment type="subcellular location">
    <subcellularLocation>
        <location>Secreted</location>
    </subcellularLocation>
</comment>
<comment type="tissue specificity">
    <text>Expressed by the venom gland.</text>
</comment>
<comment type="domain">
    <text evidence="3">Has the structural arrangement of an alpha-helix connected to antiparallel beta-sheets by disulfide bonds (CS-alpha/beta).</text>
</comment>
<comment type="mass spectrometry" mass="4184.08" method="MALDI" evidence="2"/>
<comment type="toxic dose">
    <text evidence="2">LD(50) is 5 ug/kg by intracerebroventricular injection into mice (100 ng/mouse).</text>
</comment>
<comment type="miscellaneous">
    <text evidence="4">Negative results: has no effect on Kv1.1/KCNA1.</text>
</comment>
<comment type="similarity">
    <text evidence="3">Belongs to the short scorpion toxin superfamily. Potassium channel inhibitor family. Alpha-KTx 03 subfamily.</text>
</comment>
<keyword id="KW-0027">Amidation</keyword>
<keyword id="KW-0903">Direct protein sequencing</keyword>
<keyword id="KW-1015">Disulfide bond</keyword>
<keyword id="KW-0872">Ion channel impairing toxin</keyword>
<keyword id="KW-0528">Neurotoxin</keyword>
<keyword id="KW-0632">Potassium channel impairing toxin</keyword>
<keyword id="KW-0964">Secreted</keyword>
<keyword id="KW-0800">Toxin</keyword>
<keyword id="KW-1220">Voltage-gated potassium channel impairing toxin</keyword>
<sequence length="38" mass="4192">GVEINVKCTGSHQCIKPCKDAGMRFGKCINRKCHCTPK</sequence>
<reference key="1">
    <citation type="journal article" date="2008" name="Biochem. Biophys. Res. Commun.">
        <title>A new kaliotoxin selective towards Kv1.3 and Kv1.2 but not Kv1.1 channels expressed in oocytes.</title>
        <authorList>
            <person name="Abbas N."/>
            <person name="Belghazi M."/>
            <person name="Abdel-Mottaleb Y."/>
            <person name="Tytgat J."/>
            <person name="Bougis P.E."/>
            <person name="Martin-Eauclaire M.-F."/>
        </authorList>
    </citation>
    <scope>PROTEIN SEQUENCE</scope>
    <scope>FUNCTION</scope>
    <scope>MASS SPECTROMETRY</scope>
    <scope>TOXIC DOSE</scope>
    <source>
        <tissue>Venom</tissue>
    </source>
</reference>
<evidence type="ECO:0000250" key="1"/>
<evidence type="ECO:0000269" key="2">
    <source>
    </source>
</evidence>
<evidence type="ECO:0000305" key="3"/>
<evidence type="ECO:0000305" key="4">
    <source>
    </source>
</evidence>
<protein>
    <recommendedName>
        <fullName>Potassium channel toxin alpha-KTx 3.12</fullName>
    </recommendedName>
    <alternativeName>
        <fullName>Kaliotoxin analog</fullName>
        <shortName>Aam-KTX</shortName>
    </alternativeName>
</protein>
<feature type="peptide" id="PRO_0000363663" description="Potassium channel toxin alpha-KTx 3.12">
    <location>
        <begin position="1"/>
        <end position="38"/>
    </location>
</feature>
<feature type="modified residue" description="Lysine amide" evidence="1">
    <location>
        <position position="38"/>
    </location>
</feature>
<feature type="disulfide bond" evidence="1">
    <location>
        <begin position="8"/>
        <end position="28"/>
    </location>
</feature>
<feature type="disulfide bond" evidence="1">
    <location>
        <begin position="14"/>
        <end position="33"/>
    </location>
</feature>
<feature type="disulfide bond" evidence="1">
    <location>
        <begin position="18"/>
        <end position="35"/>
    </location>
</feature>
<dbReference type="SMR" id="P0C8R1"/>
<dbReference type="TCDB" id="8.B.8.1.11">
    <property type="family name" value="the Alpha-ktx15 scorpion toxin (Alpha-ktx15) family"/>
</dbReference>
<dbReference type="GO" id="GO:0005576">
    <property type="term" value="C:extracellular region"/>
    <property type="evidence" value="ECO:0007669"/>
    <property type="project" value="UniProtKB-SubCell"/>
</dbReference>
<dbReference type="GO" id="GO:0008200">
    <property type="term" value="F:ion channel inhibitor activity"/>
    <property type="evidence" value="ECO:0007669"/>
    <property type="project" value="InterPro"/>
</dbReference>
<dbReference type="GO" id="GO:0015459">
    <property type="term" value="F:potassium channel regulator activity"/>
    <property type="evidence" value="ECO:0007669"/>
    <property type="project" value="UniProtKB-KW"/>
</dbReference>
<dbReference type="GO" id="GO:0090729">
    <property type="term" value="F:toxin activity"/>
    <property type="evidence" value="ECO:0007669"/>
    <property type="project" value="UniProtKB-KW"/>
</dbReference>
<dbReference type="FunFam" id="3.30.30.10:FF:000009">
    <property type="entry name" value="Potassium channel toxin alpha-KTx 4.3"/>
    <property type="match status" value="1"/>
</dbReference>
<dbReference type="Gene3D" id="3.30.30.10">
    <property type="entry name" value="Knottin, scorpion toxin-like"/>
    <property type="match status" value="1"/>
</dbReference>
<dbReference type="InterPro" id="IPR036574">
    <property type="entry name" value="Scorpion_toxin-like_sf"/>
</dbReference>
<dbReference type="InterPro" id="IPR001947">
    <property type="entry name" value="Scorpion_toxinS_K_inh"/>
</dbReference>
<dbReference type="Pfam" id="PF00451">
    <property type="entry name" value="Toxin_2"/>
    <property type="match status" value="1"/>
</dbReference>
<dbReference type="PRINTS" id="PR00286">
    <property type="entry name" value="CHARYBDTOXIN"/>
</dbReference>
<dbReference type="SUPFAM" id="SSF57095">
    <property type="entry name" value="Scorpion toxin-like"/>
    <property type="match status" value="1"/>
</dbReference>
<dbReference type="PROSITE" id="PS01138">
    <property type="entry name" value="SCORP_SHORT_TOXIN"/>
    <property type="match status" value="1"/>
</dbReference>
<organism>
    <name type="scientific">Androctonus amoreuxi</name>
    <name type="common">African fattail scorpion</name>
    <name type="synonym">Scorpio amoreuxi</name>
    <dbReference type="NCBI Taxonomy" id="112024"/>
    <lineage>
        <taxon>Eukaryota</taxon>
        <taxon>Metazoa</taxon>
        <taxon>Ecdysozoa</taxon>
        <taxon>Arthropoda</taxon>
        <taxon>Chelicerata</taxon>
        <taxon>Arachnida</taxon>
        <taxon>Scorpiones</taxon>
        <taxon>Buthida</taxon>
        <taxon>Buthoidea</taxon>
        <taxon>Buthidae</taxon>
        <taxon>Androctonus</taxon>
    </lineage>
</organism>
<proteinExistence type="evidence at protein level"/>
<accession>P0C8R1</accession>